<feature type="chain" id="PRO_0000098293" description="DNA translocase FtsK">
    <location>
        <begin position="1"/>
        <end position="789"/>
    </location>
</feature>
<feature type="transmembrane region" description="Helical" evidence="2">
    <location>
        <begin position="34"/>
        <end position="54"/>
    </location>
</feature>
<feature type="transmembrane region" description="Helical" evidence="2">
    <location>
        <begin position="63"/>
        <end position="83"/>
    </location>
</feature>
<feature type="transmembrane region" description="Helical" evidence="2">
    <location>
        <begin position="99"/>
        <end position="119"/>
    </location>
</feature>
<feature type="transmembrane region" description="Helical" evidence="2">
    <location>
        <begin position="137"/>
        <end position="157"/>
    </location>
</feature>
<feature type="transmembrane region" description="Helical" evidence="2">
    <location>
        <begin position="158"/>
        <end position="178"/>
    </location>
</feature>
<feature type="topological domain" description="Cytoplasmic" evidence="2">
    <location>
        <begin position="179"/>
        <end position="789"/>
    </location>
</feature>
<feature type="domain" description="FtsK" evidence="3">
    <location>
        <begin position="454"/>
        <end position="650"/>
    </location>
</feature>
<feature type="region of interest" description="Disordered" evidence="4">
    <location>
        <begin position="1"/>
        <end position="25"/>
    </location>
</feature>
<feature type="region of interest" description="Disordered" evidence="4">
    <location>
        <begin position="209"/>
        <end position="275"/>
    </location>
</feature>
<feature type="compositionally biased region" description="Basic and acidic residues" evidence="4">
    <location>
        <begin position="209"/>
        <end position="231"/>
    </location>
</feature>
<feature type="compositionally biased region" description="Basic and acidic residues" evidence="4">
    <location>
        <begin position="247"/>
        <end position="262"/>
    </location>
</feature>
<feature type="binding site" evidence="3">
    <location>
        <begin position="474"/>
        <end position="479"/>
    </location>
    <ligand>
        <name>ATP</name>
        <dbReference type="ChEBI" id="CHEBI:30616"/>
    </ligand>
</feature>
<comment type="function">
    <text evidence="1">Essential cell division protein that coordinates cell division and chromosome segregation. The N-terminus is involved in assembly of the cell-division machinery. The C-terminus functions as a DNA motor that moves dsDNA in an ATP-dependent manner towards the dif recombination site, which is located within the replication terminus region. Required for activation of the Xer recombinase, allowing activation of chromosome unlinking by recombination (By similarity).</text>
</comment>
<comment type="subunit">
    <text evidence="1">Homohexamer. Forms a ring that surrounds DNA (By similarity).</text>
</comment>
<comment type="subcellular location">
    <subcellularLocation>
        <location evidence="1">Cell membrane</location>
        <topology evidence="1">Multi-pass membrane protein</topology>
    </subcellularLocation>
    <text evidence="1">Located at the septum.</text>
</comment>
<comment type="domain">
    <text evidence="1">Consists of an N-terminal domain, which is sufficient for the localization to the septal ring and is required for cell division, followed by a linker domain, and a C-terminal domain, which forms the translocation motor involved in chromosome segregation. The C-terminal domain can be further subdivided into alpha, beta and gamma subdomains. The alpha and beta subdomains form the DNA pump, and the gamma subdomain is a regulatory subdomain (By similarity).</text>
</comment>
<comment type="similarity">
    <text evidence="5">Belongs to the FtsK/SpoIIIE/SftA family.</text>
</comment>
<comment type="sequence caution" evidence="5">
    <conflict type="erroneous initiation">
        <sequence resource="EMBL-CDS" id="AAW38126"/>
    </conflict>
    <text>Extended N-terminus.</text>
</comment>
<gene>
    <name type="primary">ftsK</name>
    <name type="ordered locus">SACOL1295</name>
</gene>
<protein>
    <recommendedName>
        <fullName>DNA translocase FtsK</fullName>
    </recommendedName>
</protein>
<keyword id="KW-0067">ATP-binding</keyword>
<keyword id="KW-0131">Cell cycle</keyword>
<keyword id="KW-0132">Cell division</keyword>
<keyword id="KW-1003">Cell membrane</keyword>
<keyword id="KW-0159">Chromosome partition</keyword>
<keyword id="KW-0238">DNA-binding</keyword>
<keyword id="KW-0472">Membrane</keyword>
<keyword id="KW-0547">Nucleotide-binding</keyword>
<keyword id="KW-0812">Transmembrane</keyword>
<keyword id="KW-1133">Transmembrane helix</keyword>
<sequence length="789" mass="88173">MAQAKKKSTAKKKTTSKKRTNSRKKKNDNPIRYVIAILVVVLMVLGVFQLGIIGRLIDSFFNYLFGYSRYLTYILVLLATGFITYSKRIPKTRRTAGSIVLQIALLFVSQLVFHFNSGIKAEREPVLSYVYQSYQHSHFPNFGGGVLGFYLLELSVPLISLFGVCIITILLLCSSVILLTNHQHREVAKVALENIKAWFGSFNEKMSERNQEKQLKREEKARLKEEQKARQNEQPQIKDVSDFTEVPQERDIPIYGHTENESKSQSQPSRKKRVFDAENSSNNIVNHHQADQQEQLTEQTHNSVESENTIEEAGEVTNVSYVVPPLTLLNQPAKQKATSKAEVQRKGQVLENTLKDFGVNAKVTQIKIGPAVTQYEIQPAQGVKVSKIVNLHNDIALALAAKDVRIEAPIPGRSAVGIEVPNEKISLVSLKEVLDEKFPSNNKLEVGLGRDISGDPITVPLNEMPHLLVAGSTGSGKSVCINGIITSILLNAKPHEVKLMLIDPKMVELNVYNGIPHLLIPVVTNPHKAAQALEKIVAEMERRYDLFQHSSTRNIKGYNELIRKQNQELDEKQPELPYIVVIVDELADLMMVAGKEVENAIQRITQMARAAGIHLIVATQRPSVDVITGIIKNNIPSRIAFAVSSQTDSRTIIGTGGAEKLLGKGDMLYVGNGDSSQTRIQGAFLSDQEVQDVVNYVVEQQQANYVKEMEPDAPVDKSEMKSEDALYDEAYLFVVEQQKASTSLLQRQFRIGYNRASRLMDDLERNQVIGPQKGSKPRQVLIDLNNDEV</sequence>
<accession>Q5HGF5</accession>
<evidence type="ECO:0000250" key="1"/>
<evidence type="ECO:0000255" key="2"/>
<evidence type="ECO:0000255" key="3">
    <source>
        <dbReference type="PROSITE-ProRule" id="PRU00289"/>
    </source>
</evidence>
<evidence type="ECO:0000256" key="4">
    <source>
        <dbReference type="SAM" id="MobiDB-lite"/>
    </source>
</evidence>
<evidence type="ECO:0000305" key="5"/>
<proteinExistence type="inferred from homology"/>
<dbReference type="EMBL" id="CP000046">
    <property type="protein sequence ID" value="AAW38126.1"/>
    <property type="status" value="ALT_INIT"/>
    <property type="molecule type" value="Genomic_DNA"/>
</dbReference>
<dbReference type="RefSeq" id="WP_000035767.1">
    <property type="nucleotide sequence ID" value="NZ_JBGOFO010000002.1"/>
</dbReference>
<dbReference type="SMR" id="Q5HGF5"/>
<dbReference type="KEGG" id="sac:SACOL1295"/>
<dbReference type="HOGENOM" id="CLU_001981_9_2_9"/>
<dbReference type="Proteomes" id="UP000000530">
    <property type="component" value="Chromosome"/>
</dbReference>
<dbReference type="GO" id="GO:0005886">
    <property type="term" value="C:plasma membrane"/>
    <property type="evidence" value="ECO:0007669"/>
    <property type="project" value="UniProtKB-SubCell"/>
</dbReference>
<dbReference type="GO" id="GO:0005524">
    <property type="term" value="F:ATP binding"/>
    <property type="evidence" value="ECO:0007669"/>
    <property type="project" value="UniProtKB-KW"/>
</dbReference>
<dbReference type="GO" id="GO:0016887">
    <property type="term" value="F:ATP hydrolysis activity"/>
    <property type="evidence" value="ECO:0007669"/>
    <property type="project" value="InterPro"/>
</dbReference>
<dbReference type="GO" id="GO:0003677">
    <property type="term" value="F:DNA binding"/>
    <property type="evidence" value="ECO:0007669"/>
    <property type="project" value="UniProtKB-KW"/>
</dbReference>
<dbReference type="GO" id="GO:0051301">
    <property type="term" value="P:cell division"/>
    <property type="evidence" value="ECO:0007669"/>
    <property type="project" value="UniProtKB-KW"/>
</dbReference>
<dbReference type="GO" id="GO:0007059">
    <property type="term" value="P:chromosome segregation"/>
    <property type="evidence" value="ECO:0007669"/>
    <property type="project" value="UniProtKB-KW"/>
</dbReference>
<dbReference type="CDD" id="cd01127">
    <property type="entry name" value="TrwB_TraG_TraD_VirD4"/>
    <property type="match status" value="1"/>
</dbReference>
<dbReference type="Gene3D" id="3.30.980.40">
    <property type="match status" value="1"/>
</dbReference>
<dbReference type="Gene3D" id="3.40.50.300">
    <property type="entry name" value="P-loop containing nucleotide triphosphate hydrolases"/>
    <property type="match status" value="1"/>
</dbReference>
<dbReference type="Gene3D" id="1.10.10.10">
    <property type="entry name" value="Winged helix-like DNA-binding domain superfamily/Winged helix DNA-binding domain"/>
    <property type="match status" value="1"/>
</dbReference>
<dbReference type="InterPro" id="IPR003593">
    <property type="entry name" value="AAA+_ATPase"/>
</dbReference>
<dbReference type="InterPro" id="IPR050206">
    <property type="entry name" value="FtsK/SpoIIIE/SftA"/>
</dbReference>
<dbReference type="InterPro" id="IPR041027">
    <property type="entry name" value="FtsK_alpha"/>
</dbReference>
<dbReference type="InterPro" id="IPR002543">
    <property type="entry name" value="FtsK_dom"/>
</dbReference>
<dbReference type="InterPro" id="IPR018541">
    <property type="entry name" value="Ftsk_gamma"/>
</dbReference>
<dbReference type="InterPro" id="IPR027417">
    <property type="entry name" value="P-loop_NTPase"/>
</dbReference>
<dbReference type="InterPro" id="IPR036388">
    <property type="entry name" value="WH-like_DNA-bd_sf"/>
</dbReference>
<dbReference type="InterPro" id="IPR036390">
    <property type="entry name" value="WH_DNA-bd_sf"/>
</dbReference>
<dbReference type="PANTHER" id="PTHR22683:SF41">
    <property type="entry name" value="DNA TRANSLOCASE FTSK"/>
    <property type="match status" value="1"/>
</dbReference>
<dbReference type="PANTHER" id="PTHR22683">
    <property type="entry name" value="SPORULATION PROTEIN RELATED"/>
    <property type="match status" value="1"/>
</dbReference>
<dbReference type="Pfam" id="PF17854">
    <property type="entry name" value="FtsK_alpha"/>
    <property type="match status" value="1"/>
</dbReference>
<dbReference type="Pfam" id="PF09397">
    <property type="entry name" value="FtsK_gamma"/>
    <property type="match status" value="1"/>
</dbReference>
<dbReference type="Pfam" id="PF01580">
    <property type="entry name" value="FtsK_SpoIIIE"/>
    <property type="match status" value="1"/>
</dbReference>
<dbReference type="SMART" id="SM00382">
    <property type="entry name" value="AAA"/>
    <property type="match status" value="1"/>
</dbReference>
<dbReference type="SMART" id="SM00843">
    <property type="entry name" value="Ftsk_gamma"/>
    <property type="match status" value="1"/>
</dbReference>
<dbReference type="SUPFAM" id="SSF52540">
    <property type="entry name" value="P-loop containing nucleoside triphosphate hydrolases"/>
    <property type="match status" value="1"/>
</dbReference>
<dbReference type="SUPFAM" id="SSF46785">
    <property type="entry name" value="Winged helix' DNA-binding domain"/>
    <property type="match status" value="1"/>
</dbReference>
<dbReference type="PROSITE" id="PS50901">
    <property type="entry name" value="FTSK"/>
    <property type="match status" value="1"/>
</dbReference>
<name>FTSK_STAAC</name>
<reference key="1">
    <citation type="journal article" date="2005" name="J. Bacteriol.">
        <title>Insights on evolution of virulence and resistance from the complete genome analysis of an early methicillin-resistant Staphylococcus aureus strain and a biofilm-producing methicillin-resistant Staphylococcus epidermidis strain.</title>
        <authorList>
            <person name="Gill S.R."/>
            <person name="Fouts D.E."/>
            <person name="Archer G.L."/>
            <person name="Mongodin E.F."/>
            <person name="DeBoy R.T."/>
            <person name="Ravel J."/>
            <person name="Paulsen I.T."/>
            <person name="Kolonay J.F."/>
            <person name="Brinkac L.M."/>
            <person name="Beanan M.J."/>
            <person name="Dodson R.J."/>
            <person name="Daugherty S.C."/>
            <person name="Madupu R."/>
            <person name="Angiuoli S.V."/>
            <person name="Durkin A.S."/>
            <person name="Haft D.H."/>
            <person name="Vamathevan J.J."/>
            <person name="Khouri H."/>
            <person name="Utterback T.R."/>
            <person name="Lee C."/>
            <person name="Dimitrov G."/>
            <person name="Jiang L."/>
            <person name="Qin H."/>
            <person name="Weidman J."/>
            <person name="Tran K."/>
            <person name="Kang K.H."/>
            <person name="Hance I.R."/>
            <person name="Nelson K.E."/>
            <person name="Fraser C.M."/>
        </authorList>
    </citation>
    <scope>NUCLEOTIDE SEQUENCE [LARGE SCALE GENOMIC DNA]</scope>
    <source>
        <strain>COL</strain>
    </source>
</reference>
<organism>
    <name type="scientific">Staphylococcus aureus (strain COL)</name>
    <dbReference type="NCBI Taxonomy" id="93062"/>
    <lineage>
        <taxon>Bacteria</taxon>
        <taxon>Bacillati</taxon>
        <taxon>Bacillota</taxon>
        <taxon>Bacilli</taxon>
        <taxon>Bacillales</taxon>
        <taxon>Staphylococcaceae</taxon>
        <taxon>Staphylococcus</taxon>
    </lineage>
</organism>